<name>COAD_GEOMG</name>
<reference key="1">
    <citation type="journal article" date="2009" name="BMC Microbiol.">
        <title>The genome sequence of Geobacter metallireducens: features of metabolism, physiology and regulation common and dissimilar to Geobacter sulfurreducens.</title>
        <authorList>
            <person name="Aklujkar M."/>
            <person name="Krushkal J."/>
            <person name="DiBartolo G."/>
            <person name="Lapidus A."/>
            <person name="Land M.L."/>
            <person name="Lovley D.R."/>
        </authorList>
    </citation>
    <scope>NUCLEOTIDE SEQUENCE [LARGE SCALE GENOMIC DNA]</scope>
    <source>
        <strain>ATCC 53774 / DSM 7210 / GS-15</strain>
    </source>
</reference>
<evidence type="ECO:0000255" key="1">
    <source>
        <dbReference type="HAMAP-Rule" id="MF_00151"/>
    </source>
</evidence>
<dbReference type="EC" id="2.7.7.3" evidence="1"/>
<dbReference type="EMBL" id="CP000148">
    <property type="protein sequence ID" value="ABB31990.1"/>
    <property type="molecule type" value="Genomic_DNA"/>
</dbReference>
<dbReference type="RefSeq" id="WP_004513345.1">
    <property type="nucleotide sequence ID" value="NC_007517.1"/>
</dbReference>
<dbReference type="SMR" id="Q39UT4"/>
<dbReference type="STRING" id="269799.Gmet_1759"/>
<dbReference type="KEGG" id="gme:Gmet_1759"/>
<dbReference type="eggNOG" id="COG0669">
    <property type="taxonomic scope" value="Bacteria"/>
</dbReference>
<dbReference type="HOGENOM" id="CLU_100149_0_1_7"/>
<dbReference type="UniPathway" id="UPA00241">
    <property type="reaction ID" value="UER00355"/>
</dbReference>
<dbReference type="Proteomes" id="UP000007073">
    <property type="component" value="Chromosome"/>
</dbReference>
<dbReference type="GO" id="GO:0005737">
    <property type="term" value="C:cytoplasm"/>
    <property type="evidence" value="ECO:0007669"/>
    <property type="project" value="UniProtKB-SubCell"/>
</dbReference>
<dbReference type="GO" id="GO:0005524">
    <property type="term" value="F:ATP binding"/>
    <property type="evidence" value="ECO:0007669"/>
    <property type="project" value="UniProtKB-KW"/>
</dbReference>
<dbReference type="GO" id="GO:0004595">
    <property type="term" value="F:pantetheine-phosphate adenylyltransferase activity"/>
    <property type="evidence" value="ECO:0007669"/>
    <property type="project" value="UniProtKB-UniRule"/>
</dbReference>
<dbReference type="GO" id="GO:0015937">
    <property type="term" value="P:coenzyme A biosynthetic process"/>
    <property type="evidence" value="ECO:0007669"/>
    <property type="project" value="UniProtKB-UniRule"/>
</dbReference>
<dbReference type="CDD" id="cd02163">
    <property type="entry name" value="PPAT"/>
    <property type="match status" value="1"/>
</dbReference>
<dbReference type="Gene3D" id="3.40.50.620">
    <property type="entry name" value="HUPs"/>
    <property type="match status" value="1"/>
</dbReference>
<dbReference type="HAMAP" id="MF_00151">
    <property type="entry name" value="PPAT_bact"/>
    <property type="match status" value="1"/>
</dbReference>
<dbReference type="InterPro" id="IPR004821">
    <property type="entry name" value="Cyt_trans-like"/>
</dbReference>
<dbReference type="InterPro" id="IPR001980">
    <property type="entry name" value="PPAT"/>
</dbReference>
<dbReference type="InterPro" id="IPR014729">
    <property type="entry name" value="Rossmann-like_a/b/a_fold"/>
</dbReference>
<dbReference type="NCBIfam" id="TIGR01510">
    <property type="entry name" value="coaD_prev_kdtB"/>
    <property type="match status" value="1"/>
</dbReference>
<dbReference type="NCBIfam" id="TIGR00125">
    <property type="entry name" value="cyt_tran_rel"/>
    <property type="match status" value="1"/>
</dbReference>
<dbReference type="PANTHER" id="PTHR21342">
    <property type="entry name" value="PHOSPHOPANTETHEINE ADENYLYLTRANSFERASE"/>
    <property type="match status" value="1"/>
</dbReference>
<dbReference type="PANTHER" id="PTHR21342:SF1">
    <property type="entry name" value="PHOSPHOPANTETHEINE ADENYLYLTRANSFERASE"/>
    <property type="match status" value="1"/>
</dbReference>
<dbReference type="Pfam" id="PF01467">
    <property type="entry name" value="CTP_transf_like"/>
    <property type="match status" value="1"/>
</dbReference>
<dbReference type="PRINTS" id="PR01020">
    <property type="entry name" value="LPSBIOSNTHSS"/>
</dbReference>
<dbReference type="SUPFAM" id="SSF52374">
    <property type="entry name" value="Nucleotidylyl transferase"/>
    <property type="match status" value="1"/>
</dbReference>
<gene>
    <name evidence="1" type="primary">coaD</name>
    <name type="ordered locus">Gmet_1759</name>
</gene>
<accession>Q39UT4</accession>
<comment type="function">
    <text evidence="1">Reversibly transfers an adenylyl group from ATP to 4'-phosphopantetheine, yielding dephospho-CoA (dPCoA) and pyrophosphate.</text>
</comment>
<comment type="catalytic activity">
    <reaction evidence="1">
        <text>(R)-4'-phosphopantetheine + ATP + H(+) = 3'-dephospho-CoA + diphosphate</text>
        <dbReference type="Rhea" id="RHEA:19801"/>
        <dbReference type="ChEBI" id="CHEBI:15378"/>
        <dbReference type="ChEBI" id="CHEBI:30616"/>
        <dbReference type="ChEBI" id="CHEBI:33019"/>
        <dbReference type="ChEBI" id="CHEBI:57328"/>
        <dbReference type="ChEBI" id="CHEBI:61723"/>
        <dbReference type="EC" id="2.7.7.3"/>
    </reaction>
</comment>
<comment type="cofactor">
    <cofactor evidence="1">
        <name>Mg(2+)</name>
        <dbReference type="ChEBI" id="CHEBI:18420"/>
    </cofactor>
</comment>
<comment type="pathway">
    <text evidence="1">Cofactor biosynthesis; coenzyme A biosynthesis; CoA from (R)-pantothenate: step 4/5.</text>
</comment>
<comment type="subunit">
    <text evidence="1">Homohexamer.</text>
</comment>
<comment type="subcellular location">
    <subcellularLocation>
        <location evidence="1">Cytoplasm</location>
    </subcellularLocation>
</comment>
<comment type="similarity">
    <text evidence="1">Belongs to the bacterial CoaD family.</text>
</comment>
<protein>
    <recommendedName>
        <fullName evidence="1">Phosphopantetheine adenylyltransferase</fullName>
        <ecNumber evidence="1">2.7.7.3</ecNumber>
    </recommendedName>
    <alternativeName>
        <fullName evidence="1">Dephospho-CoA pyrophosphorylase</fullName>
    </alternativeName>
    <alternativeName>
        <fullName evidence="1">Pantetheine-phosphate adenylyltransferase</fullName>
        <shortName evidence="1">PPAT</shortName>
    </alternativeName>
</protein>
<keyword id="KW-0067">ATP-binding</keyword>
<keyword id="KW-0173">Coenzyme A biosynthesis</keyword>
<keyword id="KW-0963">Cytoplasm</keyword>
<keyword id="KW-0460">Magnesium</keyword>
<keyword id="KW-0547">Nucleotide-binding</keyword>
<keyword id="KW-0548">Nucleotidyltransferase</keyword>
<keyword id="KW-1185">Reference proteome</keyword>
<keyword id="KW-0808">Transferase</keyword>
<feature type="chain" id="PRO_1000011150" description="Phosphopantetheine adenylyltransferase">
    <location>
        <begin position="1"/>
        <end position="163"/>
    </location>
</feature>
<feature type="binding site" evidence="1">
    <location>
        <begin position="11"/>
        <end position="12"/>
    </location>
    <ligand>
        <name>ATP</name>
        <dbReference type="ChEBI" id="CHEBI:30616"/>
    </ligand>
</feature>
<feature type="binding site" evidence="1">
    <location>
        <position position="11"/>
    </location>
    <ligand>
        <name>substrate</name>
    </ligand>
</feature>
<feature type="binding site" evidence="1">
    <location>
        <position position="19"/>
    </location>
    <ligand>
        <name>ATP</name>
        <dbReference type="ChEBI" id="CHEBI:30616"/>
    </ligand>
</feature>
<feature type="binding site" evidence="1">
    <location>
        <position position="43"/>
    </location>
    <ligand>
        <name>substrate</name>
    </ligand>
</feature>
<feature type="binding site" evidence="1">
    <location>
        <position position="75"/>
    </location>
    <ligand>
        <name>substrate</name>
    </ligand>
</feature>
<feature type="binding site" evidence="1">
    <location>
        <position position="89"/>
    </location>
    <ligand>
        <name>substrate</name>
    </ligand>
</feature>
<feature type="binding site" evidence="1">
    <location>
        <begin position="90"/>
        <end position="92"/>
    </location>
    <ligand>
        <name>ATP</name>
        <dbReference type="ChEBI" id="CHEBI:30616"/>
    </ligand>
</feature>
<feature type="binding site" evidence="1">
    <location>
        <position position="100"/>
    </location>
    <ligand>
        <name>ATP</name>
        <dbReference type="ChEBI" id="CHEBI:30616"/>
    </ligand>
</feature>
<feature type="binding site" evidence="1">
    <location>
        <begin position="125"/>
        <end position="131"/>
    </location>
    <ligand>
        <name>ATP</name>
        <dbReference type="ChEBI" id="CHEBI:30616"/>
    </ligand>
</feature>
<feature type="site" description="Transition state stabilizer" evidence="1">
    <location>
        <position position="19"/>
    </location>
</feature>
<sequence>MPRKVAVYPGSFDPITYGHLDIIDRGLRIFDEIIVAVARNSAKNSLFSIDERVDMIQRVLADNVRARVDTFDGLLVDYVLSQNATVIIRGLRAISDFEYEFQIAQMNRSISQDVETLFMMTSVPFGYLSSSIVKEVSSLNGPIDGLVPPLVREALKDKFSKPR</sequence>
<proteinExistence type="inferred from homology"/>
<organism>
    <name type="scientific">Geobacter metallireducens (strain ATCC 53774 / DSM 7210 / GS-15)</name>
    <dbReference type="NCBI Taxonomy" id="269799"/>
    <lineage>
        <taxon>Bacteria</taxon>
        <taxon>Pseudomonadati</taxon>
        <taxon>Thermodesulfobacteriota</taxon>
        <taxon>Desulfuromonadia</taxon>
        <taxon>Geobacterales</taxon>
        <taxon>Geobacteraceae</taxon>
        <taxon>Geobacter</taxon>
    </lineage>
</organism>